<proteinExistence type="inferred from homology"/>
<protein>
    <recommendedName>
        <fullName evidence="1">Carbamoyl phosphate synthase large chain</fullName>
        <ecNumber evidence="1">6.3.4.16</ecNumber>
        <ecNumber evidence="1">6.3.5.5</ecNumber>
    </recommendedName>
    <alternativeName>
        <fullName evidence="1">Carbamoyl phosphate synthetase ammonia chain</fullName>
    </alternativeName>
</protein>
<gene>
    <name evidence="1" type="primary">carB</name>
    <name type="ordered locus">MT1428</name>
</gene>
<feature type="chain" id="PRO_0000426937" description="Carbamoyl phosphate synthase large chain">
    <location>
        <begin position="1"/>
        <end position="1115"/>
    </location>
</feature>
<feature type="domain" description="ATP-grasp 1" evidence="1">
    <location>
        <begin position="138"/>
        <end position="333"/>
    </location>
</feature>
<feature type="domain" description="ATP-grasp 2" evidence="1">
    <location>
        <begin position="693"/>
        <end position="884"/>
    </location>
</feature>
<feature type="domain" description="MGS-like" evidence="1">
    <location>
        <begin position="966"/>
        <end position="1113"/>
    </location>
</feature>
<feature type="region of interest" description="Carboxyphosphate synthetic domain" evidence="1">
    <location>
        <begin position="1"/>
        <end position="407"/>
    </location>
</feature>
<feature type="region of interest" description="Oligomerization domain" evidence="1">
    <location>
        <begin position="408"/>
        <end position="559"/>
    </location>
</feature>
<feature type="region of interest" description="Carbamoyl phosphate synthetic domain" evidence="1">
    <location>
        <begin position="560"/>
        <end position="965"/>
    </location>
</feature>
<feature type="region of interest" description="Allosteric domain" evidence="1">
    <location>
        <begin position="966"/>
        <end position="1115"/>
    </location>
</feature>
<feature type="binding site" evidence="1">
    <location>
        <position position="134"/>
    </location>
    <ligand>
        <name>ATP</name>
        <dbReference type="ChEBI" id="CHEBI:30616"/>
        <label>1</label>
    </ligand>
</feature>
<feature type="binding site" evidence="1">
    <location>
        <position position="174"/>
    </location>
    <ligand>
        <name>ATP</name>
        <dbReference type="ChEBI" id="CHEBI:30616"/>
        <label>1</label>
    </ligand>
</feature>
<feature type="binding site" evidence="1">
    <location>
        <position position="180"/>
    </location>
    <ligand>
        <name>ATP</name>
        <dbReference type="ChEBI" id="CHEBI:30616"/>
        <label>1</label>
    </ligand>
</feature>
<feature type="binding site" evidence="1">
    <location>
        <position position="181"/>
    </location>
    <ligand>
        <name>ATP</name>
        <dbReference type="ChEBI" id="CHEBI:30616"/>
        <label>1</label>
    </ligand>
</feature>
<feature type="binding site" evidence="1">
    <location>
        <position position="213"/>
    </location>
    <ligand>
        <name>ATP</name>
        <dbReference type="ChEBI" id="CHEBI:30616"/>
        <label>1</label>
    </ligand>
</feature>
<feature type="binding site" evidence="1">
    <location>
        <position position="215"/>
    </location>
    <ligand>
        <name>ATP</name>
        <dbReference type="ChEBI" id="CHEBI:30616"/>
        <label>1</label>
    </ligand>
</feature>
<feature type="binding site" evidence="1">
    <location>
        <position position="220"/>
    </location>
    <ligand>
        <name>ATP</name>
        <dbReference type="ChEBI" id="CHEBI:30616"/>
        <label>1</label>
    </ligand>
</feature>
<feature type="binding site" evidence="1">
    <location>
        <position position="246"/>
    </location>
    <ligand>
        <name>ATP</name>
        <dbReference type="ChEBI" id="CHEBI:30616"/>
        <label>1</label>
    </ligand>
</feature>
<feature type="binding site" evidence="1">
    <location>
        <position position="247"/>
    </location>
    <ligand>
        <name>ATP</name>
        <dbReference type="ChEBI" id="CHEBI:30616"/>
        <label>1</label>
    </ligand>
</feature>
<feature type="binding site" evidence="1">
    <location>
        <position position="248"/>
    </location>
    <ligand>
        <name>ATP</name>
        <dbReference type="ChEBI" id="CHEBI:30616"/>
        <label>1</label>
    </ligand>
</feature>
<feature type="binding site" evidence="1">
    <location>
        <position position="290"/>
    </location>
    <ligand>
        <name>ATP</name>
        <dbReference type="ChEBI" id="CHEBI:30616"/>
        <label>1</label>
    </ligand>
</feature>
<feature type="binding site" evidence="1">
    <location>
        <position position="290"/>
    </location>
    <ligand>
        <name>Mg(2+)</name>
        <dbReference type="ChEBI" id="CHEBI:18420"/>
        <label>1</label>
    </ligand>
</feature>
<feature type="binding site" evidence="1">
    <location>
        <position position="290"/>
    </location>
    <ligand>
        <name>Mn(2+)</name>
        <dbReference type="ChEBI" id="CHEBI:29035"/>
        <label>1</label>
    </ligand>
</feature>
<feature type="binding site" evidence="1">
    <location>
        <position position="304"/>
    </location>
    <ligand>
        <name>ATP</name>
        <dbReference type="ChEBI" id="CHEBI:30616"/>
        <label>1</label>
    </ligand>
</feature>
<feature type="binding site" evidence="1">
    <location>
        <position position="304"/>
    </location>
    <ligand>
        <name>Mg(2+)</name>
        <dbReference type="ChEBI" id="CHEBI:18420"/>
        <label>1</label>
    </ligand>
</feature>
<feature type="binding site" evidence="1">
    <location>
        <position position="304"/>
    </location>
    <ligand>
        <name>Mg(2+)</name>
        <dbReference type="ChEBI" id="CHEBI:18420"/>
        <label>2</label>
    </ligand>
</feature>
<feature type="binding site" evidence="1">
    <location>
        <position position="304"/>
    </location>
    <ligand>
        <name>Mn(2+)</name>
        <dbReference type="ChEBI" id="CHEBI:29035"/>
        <label>1</label>
    </ligand>
</feature>
<feature type="binding site" evidence="1">
    <location>
        <position position="304"/>
    </location>
    <ligand>
        <name>Mn(2+)</name>
        <dbReference type="ChEBI" id="CHEBI:29035"/>
        <label>2</label>
    </ligand>
</feature>
<feature type="binding site" evidence="1">
    <location>
        <position position="306"/>
    </location>
    <ligand>
        <name>Mg(2+)</name>
        <dbReference type="ChEBI" id="CHEBI:18420"/>
        <label>2</label>
    </ligand>
</feature>
<feature type="binding site" evidence="1">
    <location>
        <position position="306"/>
    </location>
    <ligand>
        <name>Mn(2+)</name>
        <dbReference type="ChEBI" id="CHEBI:29035"/>
        <label>2</label>
    </ligand>
</feature>
<feature type="binding site" evidence="1">
    <location>
        <position position="729"/>
    </location>
    <ligand>
        <name>ATP</name>
        <dbReference type="ChEBI" id="CHEBI:30616"/>
        <label>2</label>
    </ligand>
</feature>
<feature type="binding site" evidence="1">
    <location>
        <position position="768"/>
    </location>
    <ligand>
        <name>ATP</name>
        <dbReference type="ChEBI" id="CHEBI:30616"/>
        <label>2</label>
    </ligand>
</feature>
<feature type="binding site" evidence="1">
    <location>
        <position position="770"/>
    </location>
    <ligand>
        <name>ATP</name>
        <dbReference type="ChEBI" id="CHEBI:30616"/>
        <label>2</label>
    </ligand>
</feature>
<feature type="binding site" evidence="1">
    <location>
        <position position="775"/>
    </location>
    <ligand>
        <name>ATP</name>
        <dbReference type="ChEBI" id="CHEBI:30616"/>
        <label>2</label>
    </ligand>
</feature>
<feature type="binding site" evidence="1">
    <location>
        <position position="800"/>
    </location>
    <ligand>
        <name>ATP</name>
        <dbReference type="ChEBI" id="CHEBI:30616"/>
        <label>2</label>
    </ligand>
</feature>
<feature type="binding site" evidence="1">
    <location>
        <position position="801"/>
    </location>
    <ligand>
        <name>ATP</name>
        <dbReference type="ChEBI" id="CHEBI:30616"/>
        <label>2</label>
    </ligand>
</feature>
<feature type="binding site" evidence="1">
    <location>
        <position position="802"/>
    </location>
    <ligand>
        <name>ATP</name>
        <dbReference type="ChEBI" id="CHEBI:30616"/>
        <label>2</label>
    </ligand>
</feature>
<feature type="binding site" evidence="1">
    <location>
        <position position="803"/>
    </location>
    <ligand>
        <name>ATP</name>
        <dbReference type="ChEBI" id="CHEBI:30616"/>
        <label>2</label>
    </ligand>
</feature>
<feature type="binding site" evidence="1">
    <location>
        <position position="843"/>
    </location>
    <ligand>
        <name>ATP</name>
        <dbReference type="ChEBI" id="CHEBI:30616"/>
        <label>2</label>
    </ligand>
</feature>
<feature type="binding site" evidence="1">
    <location>
        <position position="843"/>
    </location>
    <ligand>
        <name>Mg(2+)</name>
        <dbReference type="ChEBI" id="CHEBI:18420"/>
        <label>3</label>
    </ligand>
</feature>
<feature type="binding site" evidence="1">
    <location>
        <position position="843"/>
    </location>
    <ligand>
        <name>Mn(2+)</name>
        <dbReference type="ChEBI" id="CHEBI:29035"/>
        <label>3</label>
    </ligand>
</feature>
<feature type="binding site" evidence="1">
    <location>
        <position position="855"/>
    </location>
    <ligand>
        <name>ATP</name>
        <dbReference type="ChEBI" id="CHEBI:30616"/>
        <label>2</label>
    </ligand>
</feature>
<feature type="binding site" evidence="1">
    <location>
        <position position="855"/>
    </location>
    <ligand>
        <name>Mg(2+)</name>
        <dbReference type="ChEBI" id="CHEBI:18420"/>
        <label>3</label>
    </ligand>
</feature>
<feature type="binding site" evidence="1">
    <location>
        <position position="855"/>
    </location>
    <ligand>
        <name>Mg(2+)</name>
        <dbReference type="ChEBI" id="CHEBI:18420"/>
        <label>4</label>
    </ligand>
</feature>
<feature type="binding site" evidence="1">
    <location>
        <position position="855"/>
    </location>
    <ligand>
        <name>Mn(2+)</name>
        <dbReference type="ChEBI" id="CHEBI:29035"/>
        <label>3</label>
    </ligand>
</feature>
<feature type="binding site" evidence="1">
    <location>
        <position position="855"/>
    </location>
    <ligand>
        <name>Mn(2+)</name>
        <dbReference type="ChEBI" id="CHEBI:29035"/>
        <label>4</label>
    </ligand>
</feature>
<feature type="binding site" evidence="1">
    <location>
        <position position="857"/>
    </location>
    <ligand>
        <name>Mg(2+)</name>
        <dbReference type="ChEBI" id="CHEBI:18420"/>
        <label>4</label>
    </ligand>
</feature>
<feature type="binding site" evidence="1">
    <location>
        <position position="857"/>
    </location>
    <ligand>
        <name>Mn(2+)</name>
        <dbReference type="ChEBI" id="CHEBI:29035"/>
        <label>4</label>
    </ligand>
</feature>
<reference key="1">
    <citation type="journal article" date="2002" name="J. Bacteriol.">
        <title>Whole-genome comparison of Mycobacterium tuberculosis clinical and laboratory strains.</title>
        <authorList>
            <person name="Fleischmann R.D."/>
            <person name="Alland D."/>
            <person name="Eisen J.A."/>
            <person name="Carpenter L."/>
            <person name="White O."/>
            <person name="Peterson J.D."/>
            <person name="DeBoy R.T."/>
            <person name="Dodson R.J."/>
            <person name="Gwinn M.L."/>
            <person name="Haft D.H."/>
            <person name="Hickey E.K."/>
            <person name="Kolonay J.F."/>
            <person name="Nelson W.C."/>
            <person name="Umayam L.A."/>
            <person name="Ermolaeva M.D."/>
            <person name="Salzberg S.L."/>
            <person name="Delcher A."/>
            <person name="Utterback T.R."/>
            <person name="Weidman J.F."/>
            <person name="Khouri H.M."/>
            <person name="Gill J."/>
            <person name="Mikula A."/>
            <person name="Bishai W."/>
            <person name="Jacobs W.R. Jr."/>
            <person name="Venter J.C."/>
            <person name="Fraser C.M."/>
        </authorList>
    </citation>
    <scope>NUCLEOTIDE SEQUENCE [LARGE SCALE GENOMIC DNA]</scope>
    <source>
        <strain>CDC 1551 / Oshkosh</strain>
    </source>
</reference>
<sequence length="1115" mass="118961">MPRRTDLHHVLVIGSGPIVIGQACEFDYSGTQACRVLRAEGLQVSLVNSNPATIMTDPEFADHTYVEPITPAFVERVIAQQAERGNKIDALLATLGGQTALNTAVALYESGVLEKYGVELIGADFDAIQRGEDRQRFKDIVAKAGGESARSRVCFTMAEVRETVAELGLPVVVRPSFTMGGLGSGIAYSTDEVDRMAGAGLAASPSANVLIEESIYGWKEFELELMRDGHDNVVVVCSIENVDPMGVHTGDSVTVAPAMTLTDREYQRMRDLGIAILREVGVDTGGCNIQFAVNPRDGRLIVIEMNPRVSRSSALASKATGFPIAKIAAKLAIGYTLDEIVNDITGETPACFEPTLDYVVVKAPRFAFEKFPGADPTLTTTMKSVGEAMSLGRNFVEALGKVMRSLETTRAGFWTAPDPDGGIEEALTRLRTPAEGRLYDIELALRLGATVERVAEASGVDPWFIAQINELVNLRNELVAAPVLNAELLRRAKHSGLSDHQIASLRPELAGEAGVRSLRVRLGIHPVYKTVDTCAAEFEAQTPYHYSSYELDPAAETEVAPQTERPKVLILGSGPNRIGQGIEFDYSCVHAATTLSQAGFETVMVNCNPETVSTDYDTADRLYFEPLTFEDVLEVYHAEMESGSGGPGVAGVIVQLGGQTPLGLAHRLADAGVPIVGTPPEAIDLAEDRGAFGDLLSAAGLPAPKYGTATTFAQARRIAEEIGYPVLVRPSYVLGGRGMEIVYDEETLQGYITRATQLSPEHPVLVDRFLEDAVEIDVDALCDGAEVYIGGIMEHIEEAGIHSGDSACALPPVTLGRSDIAKVRKATEAIAHGIGVVGLLNVQYALKDDVLYVLEANPRASRTVPFVSKATAVPLAKACARIMLGATIAQLRAEGLLAVTGDGAHAARNAPIAVKEAVLPFHRFRRADGAAIDSLLGPEMKSTGEVMGIDRDFGSAFAKSQTAAYGSLPAQGTVFVSVANRDKRSLVFPVKRLADLGFRVLATEGTAEMLRRNGIPCDDVRKHFEPAQPGRPTMSAVDAIRAGEVNMVINTPYGNSGPRIDGYEIRSAAVAGNIPCITTVQGASAAVQGIEAGIRGDIGVRSLQELHRVIGGVER</sequence>
<dbReference type="EC" id="6.3.4.16" evidence="1"/>
<dbReference type="EC" id="6.3.5.5" evidence="1"/>
<dbReference type="EMBL" id="AE000516">
    <property type="protein sequence ID" value="AAK45693.1"/>
    <property type="molecule type" value="Genomic_DNA"/>
</dbReference>
<dbReference type="PIR" id="A70990">
    <property type="entry name" value="A70990"/>
</dbReference>
<dbReference type="RefSeq" id="WP_003898855.1">
    <property type="nucleotide sequence ID" value="NZ_KK341227.1"/>
</dbReference>
<dbReference type="SMR" id="P9WPK2"/>
<dbReference type="KEGG" id="mtc:MT1428"/>
<dbReference type="PATRIC" id="fig|83331.31.peg.1534"/>
<dbReference type="HOGENOM" id="CLU_000513_1_0_11"/>
<dbReference type="UniPathway" id="UPA00068">
    <property type="reaction ID" value="UER00171"/>
</dbReference>
<dbReference type="UniPathway" id="UPA00070">
    <property type="reaction ID" value="UER00115"/>
</dbReference>
<dbReference type="Proteomes" id="UP000001020">
    <property type="component" value="Chromosome"/>
</dbReference>
<dbReference type="GO" id="GO:0005737">
    <property type="term" value="C:cytoplasm"/>
    <property type="evidence" value="ECO:0007669"/>
    <property type="project" value="TreeGrafter"/>
</dbReference>
<dbReference type="GO" id="GO:0005524">
    <property type="term" value="F:ATP binding"/>
    <property type="evidence" value="ECO:0007669"/>
    <property type="project" value="UniProtKB-UniRule"/>
</dbReference>
<dbReference type="GO" id="GO:0004087">
    <property type="term" value="F:carbamoyl-phosphate synthase (ammonia) activity"/>
    <property type="evidence" value="ECO:0007669"/>
    <property type="project" value="RHEA"/>
</dbReference>
<dbReference type="GO" id="GO:0004088">
    <property type="term" value="F:carbamoyl-phosphate synthase (glutamine-hydrolyzing) activity"/>
    <property type="evidence" value="ECO:0007669"/>
    <property type="project" value="UniProtKB-UniRule"/>
</dbReference>
<dbReference type="GO" id="GO:0046872">
    <property type="term" value="F:metal ion binding"/>
    <property type="evidence" value="ECO:0007669"/>
    <property type="project" value="UniProtKB-KW"/>
</dbReference>
<dbReference type="GO" id="GO:0044205">
    <property type="term" value="P:'de novo' UMP biosynthetic process"/>
    <property type="evidence" value="ECO:0007669"/>
    <property type="project" value="UniProtKB-UniRule"/>
</dbReference>
<dbReference type="GO" id="GO:0006541">
    <property type="term" value="P:glutamine metabolic process"/>
    <property type="evidence" value="ECO:0007669"/>
    <property type="project" value="TreeGrafter"/>
</dbReference>
<dbReference type="GO" id="GO:0006526">
    <property type="term" value="P:L-arginine biosynthetic process"/>
    <property type="evidence" value="ECO:0007669"/>
    <property type="project" value="UniProtKB-UniRule"/>
</dbReference>
<dbReference type="CDD" id="cd01424">
    <property type="entry name" value="MGS_CPS_II"/>
    <property type="match status" value="1"/>
</dbReference>
<dbReference type="FunFam" id="1.10.1030.10:FF:000002">
    <property type="entry name" value="Carbamoyl-phosphate synthase large chain"/>
    <property type="match status" value="1"/>
</dbReference>
<dbReference type="FunFam" id="3.30.1490.20:FF:000001">
    <property type="entry name" value="Carbamoyl-phosphate synthase large chain"/>
    <property type="match status" value="1"/>
</dbReference>
<dbReference type="FunFam" id="3.30.470.20:FF:000007">
    <property type="entry name" value="Carbamoyl-phosphate synthase large chain"/>
    <property type="match status" value="1"/>
</dbReference>
<dbReference type="FunFam" id="3.30.470.20:FF:000014">
    <property type="entry name" value="Carbamoyl-phosphate synthase large chain"/>
    <property type="match status" value="1"/>
</dbReference>
<dbReference type="FunFam" id="3.40.50.1380:FF:000007">
    <property type="entry name" value="Carbamoyl-phosphate synthase large chain"/>
    <property type="match status" value="1"/>
</dbReference>
<dbReference type="FunFam" id="3.40.50.20:FF:000001">
    <property type="entry name" value="Carbamoyl-phosphate synthase large chain"/>
    <property type="match status" value="2"/>
</dbReference>
<dbReference type="Gene3D" id="3.40.50.20">
    <property type="match status" value="2"/>
</dbReference>
<dbReference type="Gene3D" id="3.30.1490.20">
    <property type="entry name" value="ATP-grasp fold, A domain"/>
    <property type="match status" value="1"/>
</dbReference>
<dbReference type="Gene3D" id="3.30.470.20">
    <property type="entry name" value="ATP-grasp fold, B domain"/>
    <property type="match status" value="2"/>
</dbReference>
<dbReference type="Gene3D" id="1.10.1030.10">
    <property type="entry name" value="Carbamoyl-phosphate synthetase, large subunit oligomerisation domain"/>
    <property type="match status" value="1"/>
</dbReference>
<dbReference type="Gene3D" id="3.40.50.1380">
    <property type="entry name" value="Methylglyoxal synthase-like domain"/>
    <property type="match status" value="1"/>
</dbReference>
<dbReference type="HAMAP" id="MF_01210_B">
    <property type="entry name" value="CPSase_L_chain_B"/>
    <property type="match status" value="1"/>
</dbReference>
<dbReference type="InterPro" id="IPR011761">
    <property type="entry name" value="ATP-grasp"/>
</dbReference>
<dbReference type="InterPro" id="IPR013815">
    <property type="entry name" value="ATP_grasp_subdomain_1"/>
</dbReference>
<dbReference type="InterPro" id="IPR006275">
    <property type="entry name" value="CarbamoylP_synth_lsu"/>
</dbReference>
<dbReference type="InterPro" id="IPR005480">
    <property type="entry name" value="CarbamoylP_synth_lsu_oligo"/>
</dbReference>
<dbReference type="InterPro" id="IPR036897">
    <property type="entry name" value="CarbamoylP_synth_lsu_oligo_sf"/>
</dbReference>
<dbReference type="InterPro" id="IPR005479">
    <property type="entry name" value="CbamoylP_synth_lsu-like_ATP-bd"/>
</dbReference>
<dbReference type="InterPro" id="IPR005483">
    <property type="entry name" value="CbamoylP_synth_lsu_CPSase_dom"/>
</dbReference>
<dbReference type="InterPro" id="IPR011607">
    <property type="entry name" value="MGS-like_dom"/>
</dbReference>
<dbReference type="InterPro" id="IPR036914">
    <property type="entry name" value="MGS-like_dom_sf"/>
</dbReference>
<dbReference type="InterPro" id="IPR033937">
    <property type="entry name" value="MGS_CPS_CarB"/>
</dbReference>
<dbReference type="InterPro" id="IPR016185">
    <property type="entry name" value="PreATP-grasp_dom_sf"/>
</dbReference>
<dbReference type="NCBIfam" id="TIGR01369">
    <property type="entry name" value="CPSaseII_lrg"/>
    <property type="match status" value="1"/>
</dbReference>
<dbReference type="NCBIfam" id="NF003671">
    <property type="entry name" value="PRK05294.1"/>
    <property type="match status" value="1"/>
</dbReference>
<dbReference type="NCBIfam" id="NF009455">
    <property type="entry name" value="PRK12815.1"/>
    <property type="match status" value="1"/>
</dbReference>
<dbReference type="PANTHER" id="PTHR11405:SF53">
    <property type="entry name" value="CARBAMOYL-PHOSPHATE SYNTHASE [AMMONIA], MITOCHONDRIAL"/>
    <property type="match status" value="1"/>
</dbReference>
<dbReference type="PANTHER" id="PTHR11405">
    <property type="entry name" value="CARBAMOYLTRANSFERASE FAMILY MEMBER"/>
    <property type="match status" value="1"/>
</dbReference>
<dbReference type="Pfam" id="PF02786">
    <property type="entry name" value="CPSase_L_D2"/>
    <property type="match status" value="2"/>
</dbReference>
<dbReference type="Pfam" id="PF02787">
    <property type="entry name" value="CPSase_L_D3"/>
    <property type="match status" value="1"/>
</dbReference>
<dbReference type="Pfam" id="PF02142">
    <property type="entry name" value="MGS"/>
    <property type="match status" value="1"/>
</dbReference>
<dbReference type="PRINTS" id="PR00098">
    <property type="entry name" value="CPSASE"/>
</dbReference>
<dbReference type="SMART" id="SM01096">
    <property type="entry name" value="CPSase_L_D3"/>
    <property type="match status" value="1"/>
</dbReference>
<dbReference type="SMART" id="SM00851">
    <property type="entry name" value="MGS"/>
    <property type="match status" value="1"/>
</dbReference>
<dbReference type="SUPFAM" id="SSF48108">
    <property type="entry name" value="Carbamoyl phosphate synthetase, large subunit connection domain"/>
    <property type="match status" value="1"/>
</dbReference>
<dbReference type="SUPFAM" id="SSF56059">
    <property type="entry name" value="Glutathione synthetase ATP-binding domain-like"/>
    <property type="match status" value="2"/>
</dbReference>
<dbReference type="SUPFAM" id="SSF52335">
    <property type="entry name" value="Methylglyoxal synthase-like"/>
    <property type="match status" value="1"/>
</dbReference>
<dbReference type="SUPFAM" id="SSF52440">
    <property type="entry name" value="PreATP-grasp domain"/>
    <property type="match status" value="2"/>
</dbReference>
<dbReference type="PROSITE" id="PS50975">
    <property type="entry name" value="ATP_GRASP"/>
    <property type="match status" value="2"/>
</dbReference>
<dbReference type="PROSITE" id="PS00866">
    <property type="entry name" value="CPSASE_1"/>
    <property type="match status" value="1"/>
</dbReference>
<dbReference type="PROSITE" id="PS00867">
    <property type="entry name" value="CPSASE_2"/>
    <property type="match status" value="2"/>
</dbReference>
<dbReference type="PROSITE" id="PS51855">
    <property type="entry name" value="MGS"/>
    <property type="match status" value="1"/>
</dbReference>
<accession>P9WPK2</accession>
<accession>L0T9H0</accession>
<accession>P57689</accession>
<comment type="function">
    <text evidence="1">Large subunit of the glutamine-dependent carbamoyl phosphate synthetase (CPSase). CPSase catalyzes the formation of carbamoyl phosphate from the ammonia moiety of glutamine, carbonate, and phosphate donated by ATP, constituting the first step of 2 biosynthetic pathways, one leading to arginine and/or urea and the other to pyrimidine nucleotides. The large subunit (synthetase) binds the substrates ammonia (free or transferred from glutamine from the small subunit), hydrogencarbonate and ATP and carries out an ATP-coupled ligase reaction, activating hydrogencarbonate by forming carboxy phosphate which reacts with ammonia to form carbamoyl phosphate.</text>
</comment>
<comment type="catalytic activity">
    <reaction evidence="1">
        <text>hydrogencarbonate + L-glutamine + 2 ATP + H2O = carbamoyl phosphate + L-glutamate + 2 ADP + phosphate + 2 H(+)</text>
        <dbReference type="Rhea" id="RHEA:18633"/>
        <dbReference type="ChEBI" id="CHEBI:15377"/>
        <dbReference type="ChEBI" id="CHEBI:15378"/>
        <dbReference type="ChEBI" id="CHEBI:17544"/>
        <dbReference type="ChEBI" id="CHEBI:29985"/>
        <dbReference type="ChEBI" id="CHEBI:30616"/>
        <dbReference type="ChEBI" id="CHEBI:43474"/>
        <dbReference type="ChEBI" id="CHEBI:58228"/>
        <dbReference type="ChEBI" id="CHEBI:58359"/>
        <dbReference type="ChEBI" id="CHEBI:456216"/>
        <dbReference type="EC" id="6.3.5.5"/>
    </reaction>
</comment>
<comment type="catalytic activity">
    <molecule>Carbamoyl phosphate synthase large chain</molecule>
    <reaction evidence="1">
        <text>hydrogencarbonate + NH4(+) + 2 ATP = carbamoyl phosphate + 2 ADP + phosphate + 2 H(+)</text>
        <dbReference type="Rhea" id="RHEA:18029"/>
        <dbReference type="ChEBI" id="CHEBI:15378"/>
        <dbReference type="ChEBI" id="CHEBI:17544"/>
        <dbReference type="ChEBI" id="CHEBI:28938"/>
        <dbReference type="ChEBI" id="CHEBI:30616"/>
        <dbReference type="ChEBI" id="CHEBI:43474"/>
        <dbReference type="ChEBI" id="CHEBI:58228"/>
        <dbReference type="ChEBI" id="CHEBI:456216"/>
        <dbReference type="EC" id="6.3.4.16"/>
    </reaction>
</comment>
<comment type="cofactor">
    <cofactor evidence="1">
        <name>Mg(2+)</name>
        <dbReference type="ChEBI" id="CHEBI:18420"/>
    </cofactor>
    <cofactor evidence="1">
        <name>Mn(2+)</name>
        <dbReference type="ChEBI" id="CHEBI:29035"/>
    </cofactor>
    <text evidence="1">Binds 4 Mg(2+) or Mn(2+) ions per subunit.</text>
</comment>
<comment type="pathway">
    <text evidence="1">Amino-acid biosynthesis; L-arginine biosynthesis; carbamoyl phosphate from bicarbonate: step 1/1.</text>
</comment>
<comment type="pathway">
    <text evidence="1">Pyrimidine metabolism; UMP biosynthesis via de novo pathway; (S)-dihydroorotate from bicarbonate: step 1/3.</text>
</comment>
<comment type="subunit">
    <text evidence="1">Composed of two chains; the small (or glutamine) chain promotes the hydrolysis of glutamine to ammonia, which is used by the large (or ammonia) chain to synthesize carbamoyl phosphate. Tetramer of heterodimers (alpha,beta)4.</text>
</comment>
<comment type="domain">
    <text evidence="1">The large subunit is composed of 2 ATP-grasp domains that are involved in binding the 2 ATP molecules needed for carbamoyl phosphate synthesis. The N-terminal ATP-grasp domain (referred to as the carboxyphosphate synthetic component) catalyzes the ATP-dependent phosphorylation of hydrogencarbonate to carboxyphosphate and the subsequent nucleophilic attack by ammonia to form a carbamate intermediate. The C-terminal ATP-grasp domain (referred to as the carbamoyl phosphate synthetic component) then catalyzes the phosphorylation of carbamate with the second ATP to form the end product carbamoyl phosphate. The reactive and unstable enzyme intermediates are sequentially channeled from one active site to the next through the interior of the protein over a distance of at least 96 A.</text>
</comment>
<comment type="similarity">
    <text evidence="1">Belongs to the CarB family.</text>
</comment>
<evidence type="ECO:0000255" key="1">
    <source>
        <dbReference type="HAMAP-Rule" id="MF_01210"/>
    </source>
</evidence>
<name>CARB_MYCTO</name>
<keyword id="KW-0028">Amino-acid biosynthesis</keyword>
<keyword id="KW-0055">Arginine biosynthesis</keyword>
<keyword id="KW-0067">ATP-binding</keyword>
<keyword id="KW-0436">Ligase</keyword>
<keyword id="KW-0460">Magnesium</keyword>
<keyword id="KW-0464">Manganese</keyword>
<keyword id="KW-0479">Metal-binding</keyword>
<keyword id="KW-0547">Nucleotide-binding</keyword>
<keyword id="KW-0665">Pyrimidine biosynthesis</keyword>
<keyword id="KW-1185">Reference proteome</keyword>
<keyword id="KW-0677">Repeat</keyword>
<organism>
    <name type="scientific">Mycobacterium tuberculosis (strain CDC 1551 / Oshkosh)</name>
    <dbReference type="NCBI Taxonomy" id="83331"/>
    <lineage>
        <taxon>Bacteria</taxon>
        <taxon>Bacillati</taxon>
        <taxon>Actinomycetota</taxon>
        <taxon>Actinomycetes</taxon>
        <taxon>Mycobacteriales</taxon>
        <taxon>Mycobacteriaceae</taxon>
        <taxon>Mycobacterium</taxon>
        <taxon>Mycobacterium tuberculosis complex</taxon>
    </lineage>
</organism>